<organism>
    <name type="scientific">Bacillus mycoides (strain KBAB4)</name>
    <name type="common">Bacillus weihenstephanensis</name>
    <dbReference type="NCBI Taxonomy" id="315730"/>
    <lineage>
        <taxon>Bacteria</taxon>
        <taxon>Bacillati</taxon>
        <taxon>Bacillota</taxon>
        <taxon>Bacilli</taxon>
        <taxon>Bacillales</taxon>
        <taxon>Bacillaceae</taxon>
        <taxon>Bacillus</taxon>
        <taxon>Bacillus cereus group</taxon>
    </lineage>
</organism>
<evidence type="ECO:0000255" key="1">
    <source>
        <dbReference type="HAMAP-Rule" id="MF_01814"/>
    </source>
</evidence>
<proteinExistence type="inferred from homology"/>
<gene>
    <name evidence="1" type="primary">fapR</name>
    <name type="ordered locus">BcerKBAB4_3677</name>
</gene>
<feature type="chain" id="PRO_1000187833" description="Transcription factor FapR">
    <location>
        <begin position="1"/>
        <end position="197"/>
    </location>
</feature>
<protein>
    <recommendedName>
        <fullName evidence="1">Transcription factor FapR</fullName>
    </recommendedName>
    <alternativeName>
        <fullName evidence="1">Fatty acid and phospholipid biosynthesis regulator</fullName>
    </alternativeName>
</protein>
<reference key="1">
    <citation type="journal article" date="2008" name="Chem. Biol. Interact.">
        <title>Extending the Bacillus cereus group genomics to putative food-borne pathogens of different toxicity.</title>
        <authorList>
            <person name="Lapidus A."/>
            <person name="Goltsman E."/>
            <person name="Auger S."/>
            <person name="Galleron N."/>
            <person name="Segurens B."/>
            <person name="Dossat C."/>
            <person name="Land M.L."/>
            <person name="Broussolle V."/>
            <person name="Brillard J."/>
            <person name="Guinebretiere M.-H."/>
            <person name="Sanchis V."/>
            <person name="Nguen-the C."/>
            <person name="Lereclus D."/>
            <person name="Richardson P."/>
            <person name="Wincker P."/>
            <person name="Weissenbach J."/>
            <person name="Ehrlich S.D."/>
            <person name="Sorokin A."/>
        </authorList>
    </citation>
    <scope>NUCLEOTIDE SEQUENCE [LARGE SCALE GENOMIC DNA]</scope>
    <source>
        <strain>KBAB4</strain>
    </source>
</reference>
<dbReference type="EMBL" id="CP000903">
    <property type="protein sequence ID" value="ABY44848.1"/>
    <property type="molecule type" value="Genomic_DNA"/>
</dbReference>
<dbReference type="RefSeq" id="WP_000747354.1">
    <property type="nucleotide sequence ID" value="NC_010184.1"/>
</dbReference>
<dbReference type="SMR" id="A9VT92"/>
<dbReference type="GeneID" id="66266582"/>
<dbReference type="KEGG" id="bwe:BcerKBAB4_3677"/>
<dbReference type="eggNOG" id="COG1349">
    <property type="taxonomic scope" value="Bacteria"/>
</dbReference>
<dbReference type="eggNOG" id="COG2050">
    <property type="taxonomic scope" value="Bacteria"/>
</dbReference>
<dbReference type="HOGENOM" id="CLU_095708_0_0_9"/>
<dbReference type="Proteomes" id="UP000002154">
    <property type="component" value="Chromosome"/>
</dbReference>
<dbReference type="GO" id="GO:0003677">
    <property type="term" value="F:DNA binding"/>
    <property type="evidence" value="ECO:0007669"/>
    <property type="project" value="UniProtKB-KW"/>
</dbReference>
<dbReference type="GO" id="GO:0003700">
    <property type="term" value="F:DNA-binding transcription factor activity"/>
    <property type="evidence" value="ECO:0007669"/>
    <property type="project" value="UniProtKB-UniRule"/>
</dbReference>
<dbReference type="GO" id="GO:0006633">
    <property type="term" value="P:fatty acid biosynthetic process"/>
    <property type="evidence" value="ECO:0007669"/>
    <property type="project" value="UniProtKB-KW"/>
</dbReference>
<dbReference type="GO" id="GO:0045892">
    <property type="term" value="P:negative regulation of DNA-templated transcription"/>
    <property type="evidence" value="ECO:0007669"/>
    <property type="project" value="UniProtKB-UniRule"/>
</dbReference>
<dbReference type="GO" id="GO:0045717">
    <property type="term" value="P:negative regulation of fatty acid biosynthetic process"/>
    <property type="evidence" value="ECO:0007669"/>
    <property type="project" value="UniProtKB-UniRule"/>
</dbReference>
<dbReference type="CDD" id="cd03440">
    <property type="entry name" value="hot_dog"/>
    <property type="match status" value="1"/>
</dbReference>
<dbReference type="Gene3D" id="3.10.129.10">
    <property type="entry name" value="Hotdog Thioesterase"/>
    <property type="match status" value="1"/>
</dbReference>
<dbReference type="Gene3D" id="1.10.10.10">
    <property type="entry name" value="Winged helix-like DNA-binding domain superfamily/Winged helix DNA-binding domain"/>
    <property type="match status" value="1"/>
</dbReference>
<dbReference type="HAMAP" id="MF_01814">
    <property type="entry name" value="Transcrip_fact_FapR"/>
    <property type="match status" value="1"/>
</dbReference>
<dbReference type="InterPro" id="IPR029069">
    <property type="entry name" value="HotDog_dom_sf"/>
</dbReference>
<dbReference type="InterPro" id="IPR006683">
    <property type="entry name" value="Thioestr_dom"/>
</dbReference>
<dbReference type="InterPro" id="IPR017275">
    <property type="entry name" value="Transcription_factor_FapR"/>
</dbReference>
<dbReference type="InterPro" id="IPR036388">
    <property type="entry name" value="WH-like_DNA-bd_sf"/>
</dbReference>
<dbReference type="InterPro" id="IPR036390">
    <property type="entry name" value="WH_DNA-bd_sf"/>
</dbReference>
<dbReference type="NCBIfam" id="NF003359">
    <property type="entry name" value="PRK04424.1"/>
    <property type="match status" value="1"/>
</dbReference>
<dbReference type="Pfam" id="PF03061">
    <property type="entry name" value="4HBT"/>
    <property type="match status" value="1"/>
</dbReference>
<dbReference type="PIRSF" id="PIRSF037733">
    <property type="entry name" value="Transcription_factor_FapR"/>
    <property type="match status" value="1"/>
</dbReference>
<dbReference type="SUPFAM" id="SSF54637">
    <property type="entry name" value="Thioesterase/thiol ester dehydrase-isomerase"/>
    <property type="match status" value="1"/>
</dbReference>
<dbReference type="SUPFAM" id="SSF46785">
    <property type="entry name" value="Winged helix' DNA-binding domain"/>
    <property type="match status" value="1"/>
</dbReference>
<name>FAPR_BACMK</name>
<accession>A9VT92</accession>
<keyword id="KW-0238">DNA-binding</keyword>
<keyword id="KW-0275">Fatty acid biosynthesis</keyword>
<keyword id="KW-0276">Fatty acid metabolism</keyword>
<keyword id="KW-0444">Lipid biosynthesis</keyword>
<keyword id="KW-0443">Lipid metabolism</keyword>
<keyword id="KW-0678">Repressor</keyword>
<keyword id="KW-0804">Transcription</keyword>
<keyword id="KW-0805">Transcription regulation</keyword>
<sequence>MKKRRSKKERQELLQQTIETNPFITDEDLAEKFQVSIQTVRLDRMELSIPELRERIKHVATKQHEEDVKSLPLEEVVGEIIDIELDRHAISIFEVKVEHVFKRNQIARGHHLFAQANSLAVAVIDEELALTAKSTIRYIRPVKLGERVVAKVRVEDVENDKGRTVVKVRSFVGEELVFTGTFEMYRSSNYSEEGNNL</sequence>
<comment type="function">
    <text evidence="1">Transcriptional factor involved in regulation of membrane lipid biosynthesis by repressing genes involved in fatty acid and phospholipid metabolism.</text>
</comment>
<comment type="similarity">
    <text evidence="1">Belongs to the FapR family.</text>
</comment>